<proteinExistence type="inferred from homology"/>
<dbReference type="EC" id="4.1.1.37" evidence="1"/>
<dbReference type="EMBL" id="CP000825">
    <property type="protein sequence ID" value="ABV50280.1"/>
    <property type="molecule type" value="Genomic_DNA"/>
</dbReference>
<dbReference type="RefSeq" id="WP_012007400.1">
    <property type="nucleotide sequence ID" value="NC_009840.1"/>
</dbReference>
<dbReference type="SMR" id="A8G3U9"/>
<dbReference type="STRING" id="93060.P9215_06651"/>
<dbReference type="KEGG" id="pmh:P9215_06651"/>
<dbReference type="eggNOG" id="COG0407">
    <property type="taxonomic scope" value="Bacteria"/>
</dbReference>
<dbReference type="HOGENOM" id="CLU_040933_0_2_3"/>
<dbReference type="OrthoDB" id="9806656at2"/>
<dbReference type="UniPathway" id="UPA00251">
    <property type="reaction ID" value="UER00321"/>
</dbReference>
<dbReference type="Proteomes" id="UP000002014">
    <property type="component" value="Chromosome"/>
</dbReference>
<dbReference type="GO" id="GO:0005737">
    <property type="term" value="C:cytoplasm"/>
    <property type="evidence" value="ECO:0007669"/>
    <property type="project" value="UniProtKB-SubCell"/>
</dbReference>
<dbReference type="GO" id="GO:0004853">
    <property type="term" value="F:uroporphyrinogen decarboxylase activity"/>
    <property type="evidence" value="ECO:0007669"/>
    <property type="project" value="UniProtKB-UniRule"/>
</dbReference>
<dbReference type="GO" id="GO:0006782">
    <property type="term" value="P:protoporphyrinogen IX biosynthetic process"/>
    <property type="evidence" value="ECO:0007669"/>
    <property type="project" value="UniProtKB-UniRule"/>
</dbReference>
<dbReference type="CDD" id="cd00717">
    <property type="entry name" value="URO-D"/>
    <property type="match status" value="1"/>
</dbReference>
<dbReference type="FunFam" id="3.20.20.210:FF:000006">
    <property type="entry name" value="Uroporphyrinogen decarboxylase"/>
    <property type="match status" value="1"/>
</dbReference>
<dbReference type="Gene3D" id="3.20.20.210">
    <property type="match status" value="1"/>
</dbReference>
<dbReference type="HAMAP" id="MF_00218">
    <property type="entry name" value="URO_D"/>
    <property type="match status" value="1"/>
</dbReference>
<dbReference type="InterPro" id="IPR038071">
    <property type="entry name" value="UROD/MetE-like_sf"/>
</dbReference>
<dbReference type="InterPro" id="IPR006361">
    <property type="entry name" value="Uroporphyrinogen_deCO2ase_HemE"/>
</dbReference>
<dbReference type="InterPro" id="IPR000257">
    <property type="entry name" value="Uroporphyrinogen_deCOase"/>
</dbReference>
<dbReference type="NCBIfam" id="TIGR01464">
    <property type="entry name" value="hemE"/>
    <property type="match status" value="1"/>
</dbReference>
<dbReference type="PANTHER" id="PTHR21091">
    <property type="entry name" value="METHYLTETRAHYDROFOLATE:HOMOCYSTEINE METHYLTRANSFERASE RELATED"/>
    <property type="match status" value="1"/>
</dbReference>
<dbReference type="PANTHER" id="PTHR21091:SF169">
    <property type="entry name" value="UROPORPHYRINOGEN DECARBOXYLASE"/>
    <property type="match status" value="1"/>
</dbReference>
<dbReference type="Pfam" id="PF01208">
    <property type="entry name" value="URO-D"/>
    <property type="match status" value="1"/>
</dbReference>
<dbReference type="SUPFAM" id="SSF51726">
    <property type="entry name" value="UROD/MetE-like"/>
    <property type="match status" value="1"/>
</dbReference>
<dbReference type="PROSITE" id="PS00906">
    <property type="entry name" value="UROD_1"/>
    <property type="match status" value="1"/>
</dbReference>
<dbReference type="PROSITE" id="PS00907">
    <property type="entry name" value="UROD_2"/>
    <property type="match status" value="1"/>
</dbReference>
<gene>
    <name evidence="1" type="primary">hemE</name>
    <name type="ordered locus">P9215_06651</name>
</gene>
<comment type="function">
    <text evidence="1">Catalyzes the decarboxylation of four acetate groups of uroporphyrinogen-III to yield coproporphyrinogen-III.</text>
</comment>
<comment type="catalytic activity">
    <reaction evidence="1">
        <text>uroporphyrinogen III + 4 H(+) = coproporphyrinogen III + 4 CO2</text>
        <dbReference type="Rhea" id="RHEA:19865"/>
        <dbReference type="ChEBI" id="CHEBI:15378"/>
        <dbReference type="ChEBI" id="CHEBI:16526"/>
        <dbReference type="ChEBI" id="CHEBI:57308"/>
        <dbReference type="ChEBI" id="CHEBI:57309"/>
        <dbReference type="EC" id="4.1.1.37"/>
    </reaction>
</comment>
<comment type="pathway">
    <text evidence="1">Porphyrin-containing compound metabolism; protoporphyrin-IX biosynthesis; coproporphyrinogen-III from 5-aminolevulinate: step 4/4.</text>
</comment>
<comment type="subunit">
    <text evidence="1">Homodimer.</text>
</comment>
<comment type="subcellular location">
    <subcellularLocation>
        <location evidence="1">Cytoplasm</location>
    </subcellularLocation>
</comment>
<comment type="similarity">
    <text evidence="1">Belongs to the uroporphyrinogen decarboxylase family.</text>
</comment>
<name>DCUP_PROM2</name>
<sequence>MGQDLPLLLSAALGKKVNRPPVWMMRQAGRYMKIYRDLRERYPSFRERSENPELSYEISMQPFHAFKPDGVILFSDILTPLPGMGINFEIIESKGPIIEDPIRNLNQIENLKELNPSESLSFVGQVLSSLKKDVNNEATVLGFVGAPWTLAAYVVEGKSSKNYSLIKSMAFKEPGLLHKLLDHFAKSIGEYLKYQIKSGAQVVQIFDSWAGQLSPEDYDIFAGPYQKKVVDIVKAEHPETPVILYISGSAGVIERMAKTGIDIISLDWTVDIEEACKRIPSGIGIQGNVDPGILFGNKESIKERIDNTFNKTKDRKYILNLGHGILPGTPEENAQTFFEHGKKLTY</sequence>
<organism>
    <name type="scientific">Prochlorococcus marinus (strain MIT 9215)</name>
    <dbReference type="NCBI Taxonomy" id="93060"/>
    <lineage>
        <taxon>Bacteria</taxon>
        <taxon>Bacillati</taxon>
        <taxon>Cyanobacteriota</taxon>
        <taxon>Cyanophyceae</taxon>
        <taxon>Synechococcales</taxon>
        <taxon>Prochlorococcaceae</taxon>
        <taxon>Prochlorococcus</taxon>
    </lineage>
</organism>
<protein>
    <recommendedName>
        <fullName evidence="1">Uroporphyrinogen decarboxylase</fullName>
        <shortName evidence="1">UPD</shortName>
        <shortName evidence="1">URO-D</shortName>
        <ecNumber evidence="1">4.1.1.37</ecNumber>
    </recommendedName>
</protein>
<evidence type="ECO:0000255" key="1">
    <source>
        <dbReference type="HAMAP-Rule" id="MF_00218"/>
    </source>
</evidence>
<accession>A8G3U9</accession>
<keyword id="KW-0963">Cytoplasm</keyword>
<keyword id="KW-0210">Decarboxylase</keyword>
<keyword id="KW-0456">Lyase</keyword>
<keyword id="KW-0627">Porphyrin biosynthesis</keyword>
<feature type="chain" id="PRO_1000058645" description="Uroporphyrinogen decarboxylase">
    <location>
        <begin position="1"/>
        <end position="346"/>
    </location>
</feature>
<feature type="binding site" evidence="1">
    <location>
        <begin position="26"/>
        <end position="30"/>
    </location>
    <ligand>
        <name>substrate</name>
    </ligand>
</feature>
<feature type="binding site" evidence="1">
    <location>
        <position position="76"/>
    </location>
    <ligand>
        <name>substrate</name>
    </ligand>
</feature>
<feature type="binding site" evidence="1">
    <location>
        <position position="153"/>
    </location>
    <ligand>
        <name>substrate</name>
    </ligand>
</feature>
<feature type="binding site" evidence="1">
    <location>
        <position position="208"/>
    </location>
    <ligand>
        <name>substrate</name>
    </ligand>
</feature>
<feature type="binding site" evidence="1">
    <location>
        <position position="323"/>
    </location>
    <ligand>
        <name>substrate</name>
    </ligand>
</feature>
<feature type="site" description="Transition state stabilizer" evidence="1">
    <location>
        <position position="76"/>
    </location>
</feature>
<reference key="1">
    <citation type="journal article" date="2007" name="PLoS Genet.">
        <title>Patterns and implications of gene gain and loss in the evolution of Prochlorococcus.</title>
        <authorList>
            <person name="Kettler G.C."/>
            <person name="Martiny A.C."/>
            <person name="Huang K."/>
            <person name="Zucker J."/>
            <person name="Coleman M.L."/>
            <person name="Rodrigue S."/>
            <person name="Chen F."/>
            <person name="Lapidus A."/>
            <person name="Ferriera S."/>
            <person name="Johnson J."/>
            <person name="Steglich C."/>
            <person name="Church G.M."/>
            <person name="Richardson P."/>
            <person name="Chisholm S.W."/>
        </authorList>
    </citation>
    <scope>NUCLEOTIDE SEQUENCE [LARGE SCALE GENOMIC DNA]</scope>
    <source>
        <strain>MIT 9215</strain>
    </source>
</reference>